<gene>
    <name type="primary">CCDC91</name>
    <name type="synonym">GGABP</name>
</gene>
<sequence length="405" mass="46030">MDDDDFGGFEAAETFDGGNGETQTTSPAIPWAAFPTVSGVHLSPPSPEIVLDHDHSSAIDCLSSDAIISSPENTHAENSIVSQTIPKAQIQQSTHTHLDISLFPLGLTDEKSNGTIALVDDSEDPGANVSNIQLRQKISSLEIKLKVSEEEKQRIKQDVESLMEKHNVLEKGFLKEKEQEAISFQDRYKELQEKHKQELEDMRKAGHEALSIIVDEYKHQRLLEMLDTEKELLKGKIKEALIQQSQEQKEILEKCLEEERQRNKEALVSAAKLEKEAMKDAVLKVVEEERKNSEKAHAEERELWKTEHAKDQEKVSQEIQKAIQEQRKISQETVKAAIIEEQKRSEKAVEEAVKRTRDELIEYIKEQKRLDQVIRQRSLSSLELFLSCAQKQLSALIATEPVDIE</sequence>
<reference key="1">
    <citation type="submission" date="2004-11" db="EMBL/GenBank/DDBJ databases">
        <authorList>
            <consortium name="The German cDNA consortium"/>
        </authorList>
    </citation>
    <scope>NUCLEOTIDE SEQUENCE [LARGE SCALE MRNA]</scope>
    <source>
        <tissue>Brain cortex</tissue>
    </source>
</reference>
<accession>Q5RCA7</accession>
<proteinExistence type="evidence at transcript level"/>
<name>CCD91_PONAB</name>
<keyword id="KW-0175">Coiled coil</keyword>
<keyword id="KW-0333">Golgi apparatus</keyword>
<keyword id="KW-0472">Membrane</keyword>
<keyword id="KW-0597">Phosphoprotein</keyword>
<keyword id="KW-0653">Protein transport</keyword>
<keyword id="KW-1185">Reference proteome</keyword>
<keyword id="KW-0813">Transport</keyword>
<feature type="chain" id="PRO_0000087480" description="Coiled-coil domain-containing protein 91">
    <location>
        <begin position="1"/>
        <end position="405"/>
    </location>
</feature>
<feature type="region of interest" description="Disordered" evidence="5">
    <location>
        <begin position="1"/>
        <end position="27"/>
    </location>
</feature>
<feature type="region of interest" description="GGA1-binding motif" evidence="1">
    <location>
        <begin position="1"/>
        <end position="16"/>
    </location>
</feature>
<feature type="region of interest" description="Homodimerization" evidence="1">
    <location>
        <begin position="210"/>
        <end position="377"/>
    </location>
</feature>
<feature type="coiled-coil region" evidence="4">
    <location>
        <begin position="126"/>
        <end position="376"/>
    </location>
</feature>
<feature type="modified residue" description="Phosphoserine" evidence="2">
    <location>
        <position position="43"/>
    </location>
</feature>
<feature type="modified residue" description="Phosphoserine" evidence="2">
    <location>
        <position position="46"/>
    </location>
</feature>
<protein>
    <recommendedName>
        <fullName>Coiled-coil domain-containing protein 91</fullName>
    </recommendedName>
    <alternativeName>
        <fullName>GGA-binding partner</fullName>
    </alternativeName>
</protein>
<dbReference type="EMBL" id="CR858371">
    <property type="protein sequence ID" value="CAH90600.1"/>
    <property type="molecule type" value="mRNA"/>
</dbReference>
<dbReference type="RefSeq" id="NP_001127307.1">
    <property type="nucleotide sequence ID" value="NM_001133835.1"/>
</dbReference>
<dbReference type="SMR" id="Q5RCA7"/>
<dbReference type="STRING" id="9601.ENSPPYP00000005009"/>
<dbReference type="GeneID" id="100174368"/>
<dbReference type="KEGG" id="pon:100174368"/>
<dbReference type="CTD" id="55297"/>
<dbReference type="eggNOG" id="ENOG502QW5U">
    <property type="taxonomic scope" value="Eukaryota"/>
</dbReference>
<dbReference type="InParanoid" id="Q5RCA7"/>
<dbReference type="OrthoDB" id="6146069at2759"/>
<dbReference type="Proteomes" id="UP000001595">
    <property type="component" value="Unplaced"/>
</dbReference>
<dbReference type="GO" id="GO:0005829">
    <property type="term" value="C:cytosol"/>
    <property type="evidence" value="ECO:0007669"/>
    <property type="project" value="GOC"/>
</dbReference>
<dbReference type="GO" id="GO:0016020">
    <property type="term" value="C:membrane"/>
    <property type="evidence" value="ECO:0007669"/>
    <property type="project" value="UniProtKB-SubCell"/>
</dbReference>
<dbReference type="GO" id="GO:0005802">
    <property type="term" value="C:trans-Golgi network"/>
    <property type="evidence" value="ECO:0000250"/>
    <property type="project" value="UniProtKB"/>
</dbReference>
<dbReference type="GO" id="GO:0090160">
    <property type="term" value="P:Golgi to lysosome transport"/>
    <property type="evidence" value="ECO:0000250"/>
    <property type="project" value="UniProtKB"/>
</dbReference>
<dbReference type="GO" id="GO:0015031">
    <property type="term" value="P:protein transport"/>
    <property type="evidence" value="ECO:0007669"/>
    <property type="project" value="UniProtKB-KW"/>
</dbReference>
<dbReference type="InterPro" id="IPR034592">
    <property type="entry name" value="CCDC91"/>
</dbReference>
<dbReference type="PANTHER" id="PTHR35072">
    <property type="entry name" value="COILED-COIL DOMAIN-CONTAINING PROTEIN 91"/>
    <property type="match status" value="1"/>
</dbReference>
<dbReference type="PANTHER" id="PTHR35072:SF1">
    <property type="entry name" value="COILED-COIL DOMAIN-CONTAINING PROTEIN 91"/>
    <property type="match status" value="1"/>
</dbReference>
<organism>
    <name type="scientific">Pongo abelii</name>
    <name type="common">Sumatran orangutan</name>
    <name type="synonym">Pongo pygmaeus abelii</name>
    <dbReference type="NCBI Taxonomy" id="9601"/>
    <lineage>
        <taxon>Eukaryota</taxon>
        <taxon>Metazoa</taxon>
        <taxon>Chordata</taxon>
        <taxon>Craniata</taxon>
        <taxon>Vertebrata</taxon>
        <taxon>Euteleostomi</taxon>
        <taxon>Mammalia</taxon>
        <taxon>Eutheria</taxon>
        <taxon>Euarchontoglires</taxon>
        <taxon>Primates</taxon>
        <taxon>Haplorrhini</taxon>
        <taxon>Catarrhini</taxon>
        <taxon>Hominidae</taxon>
        <taxon>Pongo</taxon>
    </lineage>
</organism>
<comment type="function">
    <text evidence="3">Involved in the regulation of membrane traffic through the trans-Golgi network (TGN). Functions in close cooperation with the GGAs in the sorting of hydrolases to lysosomes.</text>
</comment>
<comment type="subunit">
    <text evidence="3">Homodimer. Interacts with GGA1, GGA2 and AP1G1.</text>
</comment>
<comment type="subcellular location">
    <subcellularLocation>
        <location evidence="3">Membrane</location>
        <topology evidence="3">Peripheral membrane protein</topology>
    </subcellularLocation>
    <subcellularLocation>
        <location evidence="3">Golgi apparatus</location>
        <location evidence="3">trans-Golgi network membrane</location>
        <topology evidence="3">Peripheral membrane protein</topology>
    </subcellularLocation>
    <subcellularLocation>
        <location evidence="3">Golgi apparatus</location>
        <location evidence="3">trans-Golgi network</location>
    </subcellularLocation>
    <text evidence="3">Colocalizes with GGA1, GGA2 and GGA3.</text>
</comment>
<evidence type="ECO:0000250" key="1"/>
<evidence type="ECO:0000250" key="2">
    <source>
        <dbReference type="UniProtKB" id="Q6AY97"/>
    </source>
</evidence>
<evidence type="ECO:0000250" key="3">
    <source>
        <dbReference type="UniProtKB" id="Q7Z6B0"/>
    </source>
</evidence>
<evidence type="ECO:0000255" key="4"/>
<evidence type="ECO:0000256" key="5">
    <source>
        <dbReference type="SAM" id="MobiDB-lite"/>
    </source>
</evidence>